<comment type="function">
    <text evidence="1">Single strand-specific metallo-endoribonuclease involved in late-stage 70S ribosome quality control and in maturation of the 3' terminus of the 16S rRNA.</text>
</comment>
<comment type="cofactor">
    <cofactor evidence="1">
        <name>Zn(2+)</name>
        <dbReference type="ChEBI" id="CHEBI:29105"/>
    </cofactor>
    <text evidence="1">Binds 1 zinc ion.</text>
</comment>
<comment type="subcellular location">
    <subcellularLocation>
        <location evidence="1">Cytoplasm</location>
    </subcellularLocation>
</comment>
<comment type="similarity">
    <text evidence="1">Belongs to the endoribonuclease YbeY family.</text>
</comment>
<reference key="1">
    <citation type="submission" date="2003-06" db="EMBL/GenBank/DDBJ databases">
        <title>The complete genome sequence of Haemophilus ducreyi.</title>
        <authorList>
            <person name="Munson R.S. Jr."/>
            <person name="Ray W.C."/>
            <person name="Mahairas G."/>
            <person name="Sabo P."/>
            <person name="Mungur R."/>
            <person name="Johnson L."/>
            <person name="Nguyen D."/>
            <person name="Wang J."/>
            <person name="Forst C."/>
            <person name="Hood L."/>
        </authorList>
    </citation>
    <scope>NUCLEOTIDE SEQUENCE [LARGE SCALE GENOMIC DNA]</scope>
    <source>
        <strain>35000HP / ATCC 700724</strain>
    </source>
</reference>
<keyword id="KW-0963">Cytoplasm</keyword>
<keyword id="KW-0255">Endonuclease</keyword>
<keyword id="KW-0378">Hydrolase</keyword>
<keyword id="KW-0479">Metal-binding</keyword>
<keyword id="KW-0540">Nuclease</keyword>
<keyword id="KW-1185">Reference proteome</keyword>
<keyword id="KW-0690">Ribosome biogenesis</keyword>
<keyword id="KW-0698">rRNA processing</keyword>
<keyword id="KW-0862">Zinc</keyword>
<dbReference type="EC" id="3.1.-.-" evidence="1"/>
<dbReference type="EMBL" id="AE017143">
    <property type="protein sequence ID" value="AAP96200.1"/>
    <property type="molecule type" value="Genomic_DNA"/>
</dbReference>
<dbReference type="RefSeq" id="WP_010945249.1">
    <property type="nucleotide sequence ID" value="NC_002940.2"/>
</dbReference>
<dbReference type="SMR" id="Q7VLN5"/>
<dbReference type="STRING" id="233412.HD_1387"/>
<dbReference type="KEGG" id="hdu:HD_1387"/>
<dbReference type="eggNOG" id="COG0319">
    <property type="taxonomic scope" value="Bacteria"/>
</dbReference>
<dbReference type="HOGENOM" id="CLU_106710_0_1_6"/>
<dbReference type="OrthoDB" id="9807740at2"/>
<dbReference type="Proteomes" id="UP000001022">
    <property type="component" value="Chromosome"/>
</dbReference>
<dbReference type="GO" id="GO:0005737">
    <property type="term" value="C:cytoplasm"/>
    <property type="evidence" value="ECO:0007669"/>
    <property type="project" value="UniProtKB-SubCell"/>
</dbReference>
<dbReference type="GO" id="GO:0004222">
    <property type="term" value="F:metalloendopeptidase activity"/>
    <property type="evidence" value="ECO:0007669"/>
    <property type="project" value="InterPro"/>
</dbReference>
<dbReference type="GO" id="GO:0004521">
    <property type="term" value="F:RNA endonuclease activity"/>
    <property type="evidence" value="ECO:0007669"/>
    <property type="project" value="UniProtKB-UniRule"/>
</dbReference>
<dbReference type="GO" id="GO:0008270">
    <property type="term" value="F:zinc ion binding"/>
    <property type="evidence" value="ECO:0007669"/>
    <property type="project" value="UniProtKB-UniRule"/>
</dbReference>
<dbReference type="GO" id="GO:0006364">
    <property type="term" value="P:rRNA processing"/>
    <property type="evidence" value="ECO:0007669"/>
    <property type="project" value="UniProtKB-UniRule"/>
</dbReference>
<dbReference type="Gene3D" id="3.40.390.30">
    <property type="entry name" value="Metalloproteases ('zincins'), catalytic domain"/>
    <property type="match status" value="1"/>
</dbReference>
<dbReference type="HAMAP" id="MF_00009">
    <property type="entry name" value="Endoribonucl_YbeY"/>
    <property type="match status" value="1"/>
</dbReference>
<dbReference type="InterPro" id="IPR023091">
    <property type="entry name" value="MetalPrtase_cat_dom_sf_prd"/>
</dbReference>
<dbReference type="InterPro" id="IPR002036">
    <property type="entry name" value="YbeY"/>
</dbReference>
<dbReference type="InterPro" id="IPR020549">
    <property type="entry name" value="YbeY_CS"/>
</dbReference>
<dbReference type="NCBIfam" id="TIGR00043">
    <property type="entry name" value="rRNA maturation RNase YbeY"/>
    <property type="match status" value="1"/>
</dbReference>
<dbReference type="PANTHER" id="PTHR46986">
    <property type="entry name" value="ENDORIBONUCLEASE YBEY, CHLOROPLASTIC"/>
    <property type="match status" value="1"/>
</dbReference>
<dbReference type="PANTHER" id="PTHR46986:SF1">
    <property type="entry name" value="ENDORIBONUCLEASE YBEY, CHLOROPLASTIC"/>
    <property type="match status" value="1"/>
</dbReference>
<dbReference type="Pfam" id="PF02130">
    <property type="entry name" value="YbeY"/>
    <property type="match status" value="1"/>
</dbReference>
<dbReference type="SUPFAM" id="SSF55486">
    <property type="entry name" value="Metalloproteases ('zincins'), catalytic domain"/>
    <property type="match status" value="1"/>
</dbReference>
<dbReference type="PROSITE" id="PS01306">
    <property type="entry name" value="UPF0054"/>
    <property type="match status" value="1"/>
</dbReference>
<organism>
    <name type="scientific">Haemophilus ducreyi (strain 35000HP / ATCC 700724)</name>
    <dbReference type="NCBI Taxonomy" id="233412"/>
    <lineage>
        <taxon>Bacteria</taxon>
        <taxon>Pseudomonadati</taxon>
        <taxon>Pseudomonadota</taxon>
        <taxon>Gammaproteobacteria</taxon>
        <taxon>Pasteurellales</taxon>
        <taxon>Pasteurellaceae</taxon>
        <taxon>Haemophilus</taxon>
    </lineage>
</organism>
<feature type="chain" id="PRO_0000102462" description="Endoribonuclease YbeY">
    <location>
        <begin position="1"/>
        <end position="158"/>
    </location>
</feature>
<feature type="binding site" evidence="1">
    <location>
        <position position="118"/>
    </location>
    <ligand>
        <name>Zn(2+)</name>
        <dbReference type="ChEBI" id="CHEBI:29105"/>
        <note>catalytic</note>
    </ligand>
</feature>
<feature type="binding site" evidence="1">
    <location>
        <position position="122"/>
    </location>
    <ligand>
        <name>Zn(2+)</name>
        <dbReference type="ChEBI" id="CHEBI:29105"/>
        <note>catalytic</note>
    </ligand>
</feature>
<feature type="binding site" evidence="1">
    <location>
        <position position="128"/>
    </location>
    <ligand>
        <name>Zn(2+)</name>
        <dbReference type="ChEBI" id="CHEBI:29105"/>
        <note>catalytic</note>
    </ligand>
</feature>
<sequence>MNPIIDLQIASENSQGLPSAQQFSDWVKHALTYEAQTSNIPLTELTIRIVDEAESHHLNLTYRGKDKPTNVLSFPFEVPEGIELPLLGDLIICRQIVEKEALEQKISLDAHWAHLTIHGTLHLLGYDHIDEHEAEQMEGLESDIMQQLGFQDPYLAEK</sequence>
<accession>Q7VLN5</accession>
<proteinExistence type="inferred from homology"/>
<gene>
    <name evidence="1" type="primary">ybeY</name>
    <name type="ordered locus">HD_1387</name>
</gene>
<protein>
    <recommendedName>
        <fullName evidence="1">Endoribonuclease YbeY</fullName>
        <ecNumber evidence="1">3.1.-.-</ecNumber>
    </recommendedName>
</protein>
<evidence type="ECO:0000255" key="1">
    <source>
        <dbReference type="HAMAP-Rule" id="MF_00009"/>
    </source>
</evidence>
<name>YBEY_HAEDU</name>